<proteinExistence type="inferred from homology"/>
<feature type="chain" id="PRO_0000145332" description="DNA gyrase subunit B">
    <location>
        <begin position="1"/>
        <end position="807"/>
    </location>
</feature>
<feature type="domain" description="Toprim" evidence="1">
    <location>
        <begin position="429"/>
        <end position="543"/>
    </location>
</feature>
<feature type="binding site" evidence="1">
    <location>
        <position position="435"/>
    </location>
    <ligand>
        <name>Mg(2+)</name>
        <dbReference type="ChEBI" id="CHEBI:18420"/>
        <label>1</label>
        <note>catalytic</note>
    </ligand>
</feature>
<feature type="binding site" evidence="1">
    <location>
        <position position="508"/>
    </location>
    <ligand>
        <name>Mg(2+)</name>
        <dbReference type="ChEBI" id="CHEBI:18420"/>
        <label>1</label>
        <note>catalytic</note>
    </ligand>
</feature>
<feature type="binding site" evidence="1">
    <location>
        <position position="508"/>
    </location>
    <ligand>
        <name>Mg(2+)</name>
        <dbReference type="ChEBI" id="CHEBI:18420"/>
        <label>2</label>
    </ligand>
</feature>
<feature type="binding site" evidence="1">
    <location>
        <position position="510"/>
    </location>
    <ligand>
        <name>Mg(2+)</name>
        <dbReference type="ChEBI" id="CHEBI:18420"/>
        <label>2</label>
    </ligand>
</feature>
<feature type="site" description="Interaction with DNA" evidence="1">
    <location>
        <position position="460"/>
    </location>
</feature>
<feature type="site" description="Interaction with DNA" evidence="1">
    <location>
        <position position="463"/>
    </location>
</feature>
<keyword id="KW-0067">ATP-binding</keyword>
<keyword id="KW-0963">Cytoplasm</keyword>
<keyword id="KW-0238">DNA-binding</keyword>
<keyword id="KW-0413">Isomerase</keyword>
<keyword id="KW-0460">Magnesium</keyword>
<keyword id="KW-0479">Metal-binding</keyword>
<keyword id="KW-0547">Nucleotide-binding</keyword>
<keyword id="KW-1185">Reference proteome</keyword>
<keyword id="KW-0799">Topoisomerase</keyword>
<comment type="function">
    <text evidence="1">A type II topoisomerase that negatively supercoils closed circular double-stranded (ds) DNA in an ATP-dependent manner to modulate DNA topology and maintain chromosomes in an underwound state. Negative supercoiling favors strand separation, and DNA replication, transcription, recombination and repair, all of which involve strand separation. Also able to catalyze the interconversion of other topological isomers of dsDNA rings, including catenanes and knotted rings. Type II topoisomerases break and join 2 DNA strands simultaneously in an ATP-dependent manner.</text>
</comment>
<comment type="catalytic activity">
    <reaction evidence="1">
        <text>ATP-dependent breakage, passage and rejoining of double-stranded DNA.</text>
        <dbReference type="EC" id="5.6.2.2"/>
    </reaction>
</comment>
<comment type="cofactor">
    <cofactor evidence="1">
        <name>Mg(2+)</name>
        <dbReference type="ChEBI" id="CHEBI:18420"/>
    </cofactor>
    <cofactor evidence="1">
        <name>Mn(2+)</name>
        <dbReference type="ChEBI" id="CHEBI:29035"/>
    </cofactor>
    <cofactor evidence="1">
        <name>Ca(2+)</name>
        <dbReference type="ChEBI" id="CHEBI:29108"/>
    </cofactor>
    <text evidence="1">Binds two Mg(2+) per subunit. The magnesium ions form salt bridges with both the protein and the DNA. Can also accept other divalent metal cations, such as Mn(2+) or Ca(2+).</text>
</comment>
<comment type="subunit">
    <text evidence="1">Heterotetramer, composed of two GyrA and two GyrB chains. In the heterotetramer, GyrA contains the active site tyrosine that forms a transient covalent intermediate with DNA, while GyrB binds cofactors and catalyzes ATP hydrolysis.</text>
</comment>
<comment type="subcellular location">
    <subcellularLocation>
        <location evidence="1">Cytoplasm</location>
    </subcellularLocation>
</comment>
<comment type="miscellaneous">
    <text evidence="1">Few gyrases are as efficient as E.coli at forming negative supercoils. Not all organisms have 2 type II topoisomerases; in organisms with a single type II topoisomerase this enzyme also has to decatenate newly replicated chromosomes.</text>
</comment>
<comment type="similarity">
    <text evidence="1">Belongs to the type II topoisomerase GyrB family.</text>
</comment>
<protein>
    <recommendedName>
        <fullName evidence="1">DNA gyrase subunit B</fullName>
        <ecNumber evidence="1">5.6.2.2</ecNumber>
    </recommendedName>
</protein>
<sequence length="807" mass="90823">MSVIEEKCNESSYSADSIKVLKGLEAVRKRPGMYIGDVGDGSGLHHMIYEVVDNSIDEALAGYCDLVQVTLNKNGSVTVSDNGRGIPVEIHEEEGISAAEVIMTQLHAGGKFDQQSYKISGGLHGVGVSVVNALSEWLELRIWRNNKEYFIRFNNGITEAPLSIVKENIDKKGTEVTFFPSVGTFTNIEFDFVTIEHRLRELAFLNSGVKILLVDNRFEEVKKVEFYYTGGIEAYVQYIDRAKHAIHPCIVVNTVHVESGISLELALHWNDSYHENILCFTNNIRQRDGGTHLSAFKSAITRVITSYLDTTGLNKKTKHDFSGEDTREGICCVLSVKVPDPKFSSQTKDKLVSSEVRPVVENAVYTKVLEWFEEHPTEAKAIIAKIMEAANAREAARKARELTRRKSALEVSNLPGKLADCHAKDPAISELFIVEGDSAGGTAKQGRDSKIQAILPLRGKILNVERARFDKMLGSDQIGTLITALGISVEREFSLEKLRYHKVIIMTDADVDGSHIRALLLTFFYRHMPELINKGYLYIAQPPLYKVKSGASELYLKNEKALQNYLIKSTINDTYLILDGQEQLVGENLEDLINKVVKFNNLLDHVSKKFNRSITEILAINDLFNKKIFEPESSARLQKALDILNNLEESPDKTNLQVLKHENKIEFFHFSRGLKETKILLKEQLELFEFVEISQFALSIFDIFSKRLKLIVKSKAFDILTPSQLLNTIIECGKKGITIQRFKGLGEMNSDQLWETTLDPTKRTLLQVRVAEVDEAEGIFSTLMGDVVEPRRLFIQANALNVMNLDV</sequence>
<reference key="1">
    <citation type="journal article" date="1998" name="Nature">
        <title>The genome sequence of Rickettsia prowazekii and the origin of mitochondria.</title>
        <authorList>
            <person name="Andersson S.G.E."/>
            <person name="Zomorodipour A."/>
            <person name="Andersson J.O."/>
            <person name="Sicheritz-Ponten T."/>
            <person name="Alsmark U.C.M."/>
            <person name="Podowski R.M."/>
            <person name="Naeslund A.K."/>
            <person name="Eriksson A.-S."/>
            <person name="Winkler H.H."/>
            <person name="Kurland C.G."/>
        </authorList>
    </citation>
    <scope>NUCLEOTIDE SEQUENCE [LARGE SCALE GENOMIC DNA]</scope>
    <source>
        <strain>Madrid E</strain>
    </source>
</reference>
<dbReference type="EC" id="5.6.2.2" evidence="1"/>
<dbReference type="EMBL" id="AJ235272">
    <property type="protein sequence ID" value="CAA15027.1"/>
    <property type="molecule type" value="Genomic_DNA"/>
</dbReference>
<dbReference type="PIR" id="A71663">
    <property type="entry name" value="A71663"/>
</dbReference>
<dbReference type="RefSeq" id="NP_220951.1">
    <property type="nucleotide sequence ID" value="NC_000963.1"/>
</dbReference>
<dbReference type="RefSeq" id="WP_004597896.1">
    <property type="nucleotide sequence ID" value="NC_000963.1"/>
</dbReference>
<dbReference type="SMR" id="Q9ZCX2"/>
<dbReference type="STRING" id="272947.gene:17555660"/>
<dbReference type="EnsemblBacteria" id="CAA15027">
    <property type="protein sequence ID" value="CAA15027"/>
    <property type="gene ID" value="CAA15027"/>
</dbReference>
<dbReference type="GeneID" id="57569706"/>
<dbReference type="KEGG" id="rpr:RP580"/>
<dbReference type="PATRIC" id="fig|272947.5.peg.597"/>
<dbReference type="eggNOG" id="COG0187">
    <property type="taxonomic scope" value="Bacteria"/>
</dbReference>
<dbReference type="HOGENOM" id="CLU_006146_4_1_5"/>
<dbReference type="OrthoDB" id="9802808at2"/>
<dbReference type="Proteomes" id="UP000002480">
    <property type="component" value="Chromosome"/>
</dbReference>
<dbReference type="GO" id="GO:0005694">
    <property type="term" value="C:chromosome"/>
    <property type="evidence" value="ECO:0007669"/>
    <property type="project" value="InterPro"/>
</dbReference>
<dbReference type="GO" id="GO:0005737">
    <property type="term" value="C:cytoplasm"/>
    <property type="evidence" value="ECO:0007669"/>
    <property type="project" value="UniProtKB-SubCell"/>
</dbReference>
<dbReference type="GO" id="GO:0005524">
    <property type="term" value="F:ATP binding"/>
    <property type="evidence" value="ECO:0007669"/>
    <property type="project" value="UniProtKB-UniRule"/>
</dbReference>
<dbReference type="GO" id="GO:0003677">
    <property type="term" value="F:DNA binding"/>
    <property type="evidence" value="ECO:0007669"/>
    <property type="project" value="UniProtKB-KW"/>
</dbReference>
<dbReference type="GO" id="GO:0003918">
    <property type="term" value="F:DNA topoisomerase type II (double strand cut, ATP-hydrolyzing) activity"/>
    <property type="evidence" value="ECO:0007669"/>
    <property type="project" value="UniProtKB-UniRule"/>
</dbReference>
<dbReference type="GO" id="GO:0046872">
    <property type="term" value="F:metal ion binding"/>
    <property type="evidence" value="ECO:0007669"/>
    <property type="project" value="UniProtKB-KW"/>
</dbReference>
<dbReference type="GO" id="GO:0006265">
    <property type="term" value="P:DNA topological change"/>
    <property type="evidence" value="ECO:0007669"/>
    <property type="project" value="UniProtKB-UniRule"/>
</dbReference>
<dbReference type="GO" id="GO:0006261">
    <property type="term" value="P:DNA-templated DNA replication"/>
    <property type="evidence" value="ECO:0007669"/>
    <property type="project" value="UniProtKB-UniRule"/>
</dbReference>
<dbReference type="CDD" id="cd16928">
    <property type="entry name" value="HATPase_GyrB-like"/>
    <property type="match status" value="1"/>
</dbReference>
<dbReference type="CDD" id="cd00822">
    <property type="entry name" value="TopoII_Trans_DNA_gyrase"/>
    <property type="match status" value="1"/>
</dbReference>
<dbReference type="CDD" id="cd03366">
    <property type="entry name" value="TOPRIM_TopoIIA_GyrB"/>
    <property type="match status" value="1"/>
</dbReference>
<dbReference type="FunFam" id="3.30.230.10:FF:000005">
    <property type="entry name" value="DNA gyrase subunit B"/>
    <property type="match status" value="1"/>
</dbReference>
<dbReference type="FunFam" id="3.30.565.10:FF:000002">
    <property type="entry name" value="DNA gyrase subunit B"/>
    <property type="match status" value="1"/>
</dbReference>
<dbReference type="FunFam" id="3.40.50.670:FF:000001">
    <property type="entry name" value="DNA topoisomerase 2"/>
    <property type="match status" value="1"/>
</dbReference>
<dbReference type="Gene3D" id="3.30.230.10">
    <property type="match status" value="1"/>
</dbReference>
<dbReference type="Gene3D" id="3.40.50.670">
    <property type="match status" value="2"/>
</dbReference>
<dbReference type="Gene3D" id="3.30.565.10">
    <property type="entry name" value="Histidine kinase-like ATPase, C-terminal domain"/>
    <property type="match status" value="1"/>
</dbReference>
<dbReference type="HAMAP" id="MF_01898">
    <property type="entry name" value="GyrB"/>
    <property type="match status" value="1"/>
</dbReference>
<dbReference type="InterPro" id="IPR002288">
    <property type="entry name" value="DNA_gyrase_B_C"/>
</dbReference>
<dbReference type="InterPro" id="IPR011557">
    <property type="entry name" value="GyrB"/>
</dbReference>
<dbReference type="InterPro" id="IPR036890">
    <property type="entry name" value="HATPase_C_sf"/>
</dbReference>
<dbReference type="InterPro" id="IPR020568">
    <property type="entry name" value="Ribosomal_Su5_D2-typ_SF"/>
</dbReference>
<dbReference type="InterPro" id="IPR014721">
    <property type="entry name" value="Ribsml_uS5_D2-typ_fold_subgr"/>
</dbReference>
<dbReference type="InterPro" id="IPR001241">
    <property type="entry name" value="Topo_IIA"/>
</dbReference>
<dbReference type="InterPro" id="IPR013760">
    <property type="entry name" value="Topo_IIA-like_dom_sf"/>
</dbReference>
<dbReference type="InterPro" id="IPR000565">
    <property type="entry name" value="Topo_IIA_B"/>
</dbReference>
<dbReference type="InterPro" id="IPR013759">
    <property type="entry name" value="Topo_IIA_B_C"/>
</dbReference>
<dbReference type="InterPro" id="IPR013506">
    <property type="entry name" value="Topo_IIA_bsu_dom2"/>
</dbReference>
<dbReference type="InterPro" id="IPR018522">
    <property type="entry name" value="TopoIIA_CS"/>
</dbReference>
<dbReference type="InterPro" id="IPR006171">
    <property type="entry name" value="TOPRIM_dom"/>
</dbReference>
<dbReference type="InterPro" id="IPR034160">
    <property type="entry name" value="TOPRIM_GyrB"/>
</dbReference>
<dbReference type="NCBIfam" id="TIGR01059">
    <property type="entry name" value="gyrB"/>
    <property type="match status" value="1"/>
</dbReference>
<dbReference type="NCBIfam" id="NF004189">
    <property type="entry name" value="PRK05644.1"/>
    <property type="match status" value="1"/>
</dbReference>
<dbReference type="NCBIfam" id="NF011501">
    <property type="entry name" value="PRK14939.1"/>
    <property type="match status" value="1"/>
</dbReference>
<dbReference type="PANTHER" id="PTHR45866:SF1">
    <property type="entry name" value="DNA GYRASE SUBUNIT B, MITOCHONDRIAL"/>
    <property type="match status" value="1"/>
</dbReference>
<dbReference type="PANTHER" id="PTHR45866">
    <property type="entry name" value="DNA GYRASE/TOPOISOMERASE SUBUNIT B"/>
    <property type="match status" value="1"/>
</dbReference>
<dbReference type="Pfam" id="PF00204">
    <property type="entry name" value="DNA_gyraseB"/>
    <property type="match status" value="1"/>
</dbReference>
<dbReference type="Pfam" id="PF00986">
    <property type="entry name" value="DNA_gyraseB_C"/>
    <property type="match status" value="1"/>
</dbReference>
<dbReference type="Pfam" id="PF02518">
    <property type="entry name" value="HATPase_c"/>
    <property type="match status" value="1"/>
</dbReference>
<dbReference type="Pfam" id="PF01751">
    <property type="entry name" value="Toprim"/>
    <property type="match status" value="1"/>
</dbReference>
<dbReference type="PRINTS" id="PR01159">
    <property type="entry name" value="DNAGYRASEB"/>
</dbReference>
<dbReference type="PRINTS" id="PR00418">
    <property type="entry name" value="TPI2FAMILY"/>
</dbReference>
<dbReference type="SMART" id="SM00387">
    <property type="entry name" value="HATPase_c"/>
    <property type="match status" value="1"/>
</dbReference>
<dbReference type="SMART" id="SM00433">
    <property type="entry name" value="TOP2c"/>
    <property type="match status" value="1"/>
</dbReference>
<dbReference type="SUPFAM" id="SSF55874">
    <property type="entry name" value="ATPase domain of HSP90 chaperone/DNA topoisomerase II/histidine kinase"/>
    <property type="match status" value="1"/>
</dbReference>
<dbReference type="SUPFAM" id="SSF54211">
    <property type="entry name" value="Ribosomal protein S5 domain 2-like"/>
    <property type="match status" value="1"/>
</dbReference>
<dbReference type="SUPFAM" id="SSF56719">
    <property type="entry name" value="Type II DNA topoisomerase"/>
    <property type="match status" value="1"/>
</dbReference>
<dbReference type="PROSITE" id="PS00177">
    <property type="entry name" value="TOPOISOMERASE_II"/>
    <property type="match status" value="1"/>
</dbReference>
<dbReference type="PROSITE" id="PS50880">
    <property type="entry name" value="TOPRIM"/>
    <property type="match status" value="1"/>
</dbReference>
<evidence type="ECO:0000255" key="1">
    <source>
        <dbReference type="HAMAP-Rule" id="MF_01898"/>
    </source>
</evidence>
<gene>
    <name evidence="1" type="primary">gyrB</name>
    <name type="ordered locus">RP580</name>
</gene>
<accession>Q9ZCX2</accession>
<organism>
    <name type="scientific">Rickettsia prowazekii (strain Madrid E)</name>
    <dbReference type="NCBI Taxonomy" id="272947"/>
    <lineage>
        <taxon>Bacteria</taxon>
        <taxon>Pseudomonadati</taxon>
        <taxon>Pseudomonadota</taxon>
        <taxon>Alphaproteobacteria</taxon>
        <taxon>Rickettsiales</taxon>
        <taxon>Rickettsiaceae</taxon>
        <taxon>Rickettsieae</taxon>
        <taxon>Rickettsia</taxon>
        <taxon>typhus group</taxon>
    </lineage>
</organism>
<name>GYRB_RICPR</name>